<comment type="catalytic activity">
    <reaction>
        <text>glyoxylate + acetyl-CoA + H2O = (S)-malate + CoA + H(+)</text>
        <dbReference type="Rhea" id="RHEA:18181"/>
        <dbReference type="ChEBI" id="CHEBI:15377"/>
        <dbReference type="ChEBI" id="CHEBI:15378"/>
        <dbReference type="ChEBI" id="CHEBI:15589"/>
        <dbReference type="ChEBI" id="CHEBI:36655"/>
        <dbReference type="ChEBI" id="CHEBI:57287"/>
        <dbReference type="ChEBI" id="CHEBI:57288"/>
        <dbReference type="EC" id="2.3.3.9"/>
    </reaction>
</comment>
<comment type="pathway">
    <text>Carbohydrate metabolism; glyoxylate cycle; (S)-malate from isocitrate: step 2/2.</text>
</comment>
<comment type="subcellular location">
    <subcellularLocation>
        <location>Glyoxysome</location>
    </subcellularLocation>
</comment>
<comment type="similarity">
    <text evidence="3">Belongs to the malate synthase family.</text>
</comment>
<dbReference type="EC" id="2.3.3.9"/>
<dbReference type="EMBL" id="X56672">
    <property type="protein sequence ID" value="CAA39994.1"/>
    <property type="molecule type" value="Genomic_DNA"/>
</dbReference>
<dbReference type="EMBL" id="CM002236">
    <property type="protein sequence ID" value="ESA43774.1"/>
    <property type="molecule type" value="Genomic_DNA"/>
</dbReference>
<dbReference type="EMBL" id="CM002236">
    <property type="protein sequence ID" value="ESA43775.1"/>
    <property type="molecule type" value="Genomic_DNA"/>
</dbReference>
<dbReference type="PIR" id="S17774">
    <property type="entry name" value="S17774"/>
</dbReference>
<dbReference type="RefSeq" id="XP_011393298.1">
    <property type="nucleotide sequence ID" value="XM_011394996.1"/>
</dbReference>
<dbReference type="RefSeq" id="XP_011393299.1">
    <property type="nucleotide sequence ID" value="XM_011394997.1"/>
</dbReference>
<dbReference type="SMR" id="P28345"/>
<dbReference type="FunCoup" id="P28345">
    <property type="interactions" value="490"/>
</dbReference>
<dbReference type="STRING" id="367110.P28345"/>
<dbReference type="PaxDb" id="5141-EFNCRP00000008710"/>
<dbReference type="EnsemblFungi" id="ESA43774">
    <property type="protein sequence ID" value="ESA43774"/>
    <property type="gene ID" value="NCU10007"/>
</dbReference>
<dbReference type="EnsemblFungi" id="ESA43775">
    <property type="protein sequence ID" value="ESA43775"/>
    <property type="gene ID" value="NCU10007"/>
</dbReference>
<dbReference type="GeneID" id="3875600"/>
<dbReference type="KEGG" id="ncr:NCU10007"/>
<dbReference type="VEuPathDB" id="FungiDB:NCU10007"/>
<dbReference type="HOGENOM" id="CLU_018928_3_0_1"/>
<dbReference type="InParanoid" id="P28345"/>
<dbReference type="OMA" id="WHLPERH"/>
<dbReference type="OrthoDB" id="186072at2759"/>
<dbReference type="UniPathway" id="UPA00703">
    <property type="reaction ID" value="UER00720"/>
</dbReference>
<dbReference type="Proteomes" id="UP000001805">
    <property type="component" value="Chromosome 1, Linkage Group I"/>
</dbReference>
<dbReference type="GO" id="GO:0005737">
    <property type="term" value="C:cytoplasm"/>
    <property type="evidence" value="ECO:0000318"/>
    <property type="project" value="GO_Central"/>
</dbReference>
<dbReference type="GO" id="GO:0009514">
    <property type="term" value="C:glyoxysome"/>
    <property type="evidence" value="ECO:0007669"/>
    <property type="project" value="UniProtKB-SubCell"/>
</dbReference>
<dbReference type="GO" id="GO:0005782">
    <property type="term" value="C:peroxisomal matrix"/>
    <property type="evidence" value="ECO:0000318"/>
    <property type="project" value="GO_Central"/>
</dbReference>
<dbReference type="GO" id="GO:0004474">
    <property type="term" value="F:malate synthase activity"/>
    <property type="evidence" value="ECO:0000318"/>
    <property type="project" value="GO_Central"/>
</dbReference>
<dbReference type="GO" id="GO:0006097">
    <property type="term" value="P:glyoxylate cycle"/>
    <property type="evidence" value="ECO:0000318"/>
    <property type="project" value="GO_Central"/>
</dbReference>
<dbReference type="GO" id="GO:0006099">
    <property type="term" value="P:tricarboxylic acid cycle"/>
    <property type="evidence" value="ECO:0007669"/>
    <property type="project" value="UniProtKB-KW"/>
</dbReference>
<dbReference type="CDD" id="cd00727">
    <property type="entry name" value="malate_synt_A"/>
    <property type="match status" value="1"/>
</dbReference>
<dbReference type="FunFam" id="1.20.1220.12:FF:000001">
    <property type="entry name" value="Malate synthase"/>
    <property type="match status" value="1"/>
</dbReference>
<dbReference type="FunFam" id="3.20.20.360:FF:000001">
    <property type="entry name" value="Malate synthase"/>
    <property type="match status" value="1"/>
</dbReference>
<dbReference type="Gene3D" id="3.20.20.360">
    <property type="entry name" value="Malate synthase, domain 3"/>
    <property type="match status" value="1"/>
</dbReference>
<dbReference type="Gene3D" id="1.20.1220.12">
    <property type="entry name" value="Malate synthase, domain III"/>
    <property type="match status" value="1"/>
</dbReference>
<dbReference type="InterPro" id="IPR044856">
    <property type="entry name" value="Malate_synth_C_sf"/>
</dbReference>
<dbReference type="InterPro" id="IPR011076">
    <property type="entry name" value="Malate_synth_sf"/>
</dbReference>
<dbReference type="InterPro" id="IPR006252">
    <property type="entry name" value="Malate_synthA"/>
</dbReference>
<dbReference type="InterPro" id="IPR019830">
    <property type="entry name" value="Malate_synthase_CS"/>
</dbReference>
<dbReference type="InterPro" id="IPR001465">
    <property type="entry name" value="Malate_synthase_TIM"/>
</dbReference>
<dbReference type="InterPro" id="IPR048355">
    <property type="entry name" value="MS_C"/>
</dbReference>
<dbReference type="InterPro" id="IPR048356">
    <property type="entry name" value="MS_N"/>
</dbReference>
<dbReference type="InterPro" id="IPR046363">
    <property type="entry name" value="MS_N_TIM-barrel_dom"/>
</dbReference>
<dbReference type="NCBIfam" id="TIGR01344">
    <property type="entry name" value="malate_syn_A"/>
    <property type="match status" value="1"/>
</dbReference>
<dbReference type="PANTHER" id="PTHR42902">
    <property type="entry name" value="MALATE SYNTHASE"/>
    <property type="match status" value="1"/>
</dbReference>
<dbReference type="PANTHER" id="PTHR42902:SF1">
    <property type="entry name" value="MALATE SYNTHASE 1-RELATED"/>
    <property type="match status" value="1"/>
</dbReference>
<dbReference type="Pfam" id="PF20659">
    <property type="entry name" value="MS_C"/>
    <property type="match status" value="1"/>
</dbReference>
<dbReference type="Pfam" id="PF20656">
    <property type="entry name" value="MS_N"/>
    <property type="match status" value="1"/>
</dbReference>
<dbReference type="Pfam" id="PF01274">
    <property type="entry name" value="MS_TIM-barrel"/>
    <property type="match status" value="1"/>
</dbReference>
<dbReference type="PIRSF" id="PIRSF001363">
    <property type="entry name" value="Malate_synth"/>
    <property type="match status" value="1"/>
</dbReference>
<dbReference type="SUPFAM" id="SSF51645">
    <property type="entry name" value="Malate synthase G"/>
    <property type="match status" value="1"/>
</dbReference>
<dbReference type="PROSITE" id="PS00510">
    <property type="entry name" value="MALATE_SYNTHASE"/>
    <property type="match status" value="1"/>
</dbReference>
<name>MASY_NEUCR</name>
<gene>
    <name type="primary">acu-9</name>
    <name type="ORF">NCU10007</name>
</gene>
<feature type="chain" id="PRO_0000166862" description="Malate synthase, glyoxysomal">
    <location>
        <begin position="1"/>
        <end position="542"/>
    </location>
</feature>
<feature type="short sequence motif" description="Microbody targeting signal" evidence="2">
    <location>
        <begin position="540"/>
        <end position="542"/>
    </location>
</feature>
<feature type="active site" description="Proton acceptor" evidence="1">
    <location>
        <position position="168"/>
    </location>
</feature>
<feature type="active site" description="Proton donor" evidence="1">
    <location>
        <position position="449"/>
    </location>
</feature>
<feature type="sequence conflict" description="In Ref. 1; CAA39994." evidence="3" ref="1">
    <original>QL</original>
    <variation>HV</variation>
    <location>
        <begin position="52"/>
        <end position="53"/>
    </location>
</feature>
<feature type="sequence conflict" description="In Ref. 1." evidence="3" ref="1">
    <original>PPAPG</original>
    <variation>APAAPP</variation>
    <location>
        <begin position="83"/>
        <end position="87"/>
    </location>
</feature>
<feature type="sequence conflict" description="In Ref. 1; CAA39994." evidence="3" ref="1">
    <original>I</original>
    <variation>M</variation>
    <location>
        <position position="95"/>
    </location>
</feature>
<feature type="sequence conflict" description="In Ref. 1; CAA39994." evidence="3" ref="1">
    <original>L</original>
    <variation>P</variation>
    <location>
        <position position="215"/>
    </location>
</feature>
<feature type="sequence conflict" description="In Ref. 1; CAA39994." evidence="3" ref="1">
    <original>RG</original>
    <variation>LS</variation>
    <location>
        <begin position="242"/>
        <end position="243"/>
    </location>
</feature>
<feature type="sequence conflict" description="In Ref. 1; CAA39994." evidence="3" ref="1">
    <original>L</original>
    <variation>T</variation>
    <location>
        <position position="255"/>
    </location>
</feature>
<feature type="sequence conflict" description="In Ref. 1; CAA39994." evidence="3" ref="1">
    <original>Y</original>
    <variation>F</variation>
    <location>
        <position position="265"/>
    </location>
</feature>
<feature type="sequence conflict" description="In Ref. 1; CAA39994." evidence="3" ref="1">
    <original>EHS</original>
    <variation>NHT</variation>
    <location>
        <begin position="269"/>
        <end position="271"/>
    </location>
</feature>
<feature type="sequence conflict" description="In Ref. 1; CAA39994." evidence="3" ref="1">
    <original>CGR</original>
    <variation>RGG</variation>
    <location>
        <begin position="276"/>
        <end position="278"/>
    </location>
</feature>
<feature type="sequence conflict" description="In Ref. 1; CAA39994." evidence="3" ref="1">
    <original>ST</original>
    <variation>PF</variation>
    <location>
        <begin position="284"/>
        <end position="285"/>
    </location>
</feature>
<feature type="sequence conflict" description="In Ref. 1; CAA39994." evidence="3" ref="1">
    <original>KFRNHSS</original>
    <variation>EVRRFPN</variation>
    <location>
        <begin position="288"/>
        <end position="294"/>
    </location>
</feature>
<feature type="sequence conflict" description="In Ref. 1; CAA39994." evidence="3" ref="1">
    <original>C</original>
    <variation>D</variation>
    <location>
        <position position="302"/>
    </location>
</feature>
<feature type="sequence conflict" description="In Ref. 1; CAA39994." evidence="3" ref="1">
    <original>D</original>
    <variation>E</variation>
    <location>
        <position position="311"/>
    </location>
</feature>
<feature type="sequence conflict" description="In Ref. 1; CAA39994." evidence="3" ref="1">
    <original>QTCHKRG</original>
    <variation>KTLHRLV</variation>
    <location>
        <begin position="319"/>
        <end position="325"/>
    </location>
</feature>
<feature type="sequence conflict" description="In Ref. 1; CAA39994." evidence="3" ref="1">
    <location>
        <position position="331"/>
    </location>
</feature>
<feature type="sequence conflict" description="In Ref. 1; CAA39994." evidence="3" ref="1">
    <original>I</original>
    <variation>S</variation>
    <location>
        <position position="415"/>
    </location>
</feature>
<feature type="sequence conflict" description="In Ref. 1; CAA39994." evidence="3" ref="1">
    <original>E</original>
    <variation>D</variation>
    <location>
        <position position="418"/>
    </location>
</feature>
<feature type="sequence conflict" description="In Ref. 1; CAA39994." evidence="3" ref="1">
    <original>I</original>
    <variation>T</variation>
    <location>
        <position position="426"/>
    </location>
</feature>
<feature type="sequence conflict" description="In Ref. 1; CAA39994." evidence="3" ref="1">
    <original>MEA</original>
    <variation>TEP</variation>
    <location>
        <begin position="431"/>
        <end position="433"/>
    </location>
</feature>
<feature type="sequence conflict" description="In Ref. 1; CAA39994." evidence="3" ref="1">
    <original>NYLM</original>
    <variation>KHPQ</variation>
    <location>
        <begin position="444"/>
        <end position="447"/>
    </location>
</feature>
<feature type="sequence conflict" description="In Ref. 1; CAA39994." evidence="3" ref="1">
    <original>G</original>
    <variation>R</variation>
    <location>
        <position position="467"/>
    </location>
</feature>
<feature type="sequence conflict" description="In Ref. 1; CAA39994." evidence="3" ref="1">
    <original>R</original>
    <variation>H</variation>
    <location>
        <position position="475"/>
    </location>
</feature>
<feature type="sequence conflict" description="In Ref. 1; CAA39994." evidence="3" ref="1">
    <original>SYA</original>
    <variation>RYP</variation>
    <location>
        <begin position="479"/>
        <end position="481"/>
    </location>
</feature>
<feature type="sequence conflict" description="In Ref. 1; CAA39994." evidence="3" ref="1">
    <original>QTDELAS</original>
    <variation>ADRQRLA</variation>
    <location>
        <begin position="488"/>
        <end position="494"/>
    </location>
</feature>
<feature type="sequence conflict" description="In Ref. 1; CAA39994." evidence="3" ref="1">
    <original>T</original>
    <variation>S</variation>
    <location>
        <position position="511"/>
    </location>
</feature>
<feature type="sequence conflict" description="In Ref. 1; CAA39994." evidence="3" ref="1">
    <original>S</original>
    <variation>C</variation>
    <location>
        <position position="524"/>
    </location>
</feature>
<proteinExistence type="inferred from homology"/>
<accession>P28345</accession>
<accession>Q7RV95</accession>
<accession>V5IPX4</accession>
<sequence>MASVETLLQGVTISGPIEEHQRKILTPQALSFVALLHRSFNQTRKNLLERRQLRQAEIDRGVLPDFLPETKHIRENPTWKGAPPAPGLVDRRVEITGPTDRKMVVNALNSDVYTYMADFEDSSAPTWANMVNGQVNLYDAIRRQIDFKQGPKEYKLRTDRTLPTLIVRPRGWHLEEKHVTIDGEPVSGSLFDFGLYFFHNAKELVQRGFGPYFYLPKMESHLEARLWNDAFNLAQDYVGIPRGTIRGTVLIETILAAFEMDEIIYELREHSSGLNCGRWDYIFSTIKKFRNHSSFVLPDRSCVTMTVPFMDAYVKLLIQTCHKRGVHAMGGMAAQIPIKDDKAANDKAMEGVRADKLREARAGHDGTWVAHPALASIALEVFNKHMPTPNQLFNRREDVKIGQQDLLNMNVPGSITEEGIRKNLNIGLGYMEAWIRGVGCVPINYLMEDAATAEVSRSQLWQWVKHGVTTAEGKRVDKSYALKLLKEQTDELASKAPQGNKFNLAAQYFATQVTGEDYADFLTSLLYNEITSAGNSLPASKL</sequence>
<organism>
    <name type="scientific">Neurospora crassa (strain ATCC 24698 / 74-OR23-1A / CBS 708.71 / DSM 1257 / FGSC 987)</name>
    <dbReference type="NCBI Taxonomy" id="367110"/>
    <lineage>
        <taxon>Eukaryota</taxon>
        <taxon>Fungi</taxon>
        <taxon>Dikarya</taxon>
        <taxon>Ascomycota</taxon>
        <taxon>Pezizomycotina</taxon>
        <taxon>Sordariomycetes</taxon>
        <taxon>Sordariomycetidae</taxon>
        <taxon>Sordariales</taxon>
        <taxon>Sordariaceae</taxon>
        <taxon>Neurospora</taxon>
    </lineage>
</organism>
<keyword id="KW-0329">Glyoxylate bypass</keyword>
<keyword id="KW-0330">Glyoxysome</keyword>
<keyword id="KW-0576">Peroxisome</keyword>
<keyword id="KW-1185">Reference proteome</keyword>
<keyword id="KW-0808">Transferase</keyword>
<keyword id="KW-0816">Tricarboxylic acid cycle</keyword>
<evidence type="ECO:0000250" key="1"/>
<evidence type="ECO:0000255" key="2"/>
<evidence type="ECO:0000305" key="3"/>
<protein>
    <recommendedName>
        <fullName>Malate synthase, glyoxysomal</fullName>
        <ecNumber>2.3.3.9</ecNumber>
    </recommendedName>
    <alternativeName>
        <fullName>Acetate utilization protein 9</fullName>
    </alternativeName>
</protein>
<reference key="1">
    <citation type="journal article" date="1991" name="Mol. Gen. Genet.">
        <title>Molecular organisation of the malate synthase genes of Aspergillus nidulans and Neurospora crassa.</title>
        <authorList>
            <person name="Sandeman R.A."/>
            <person name="Hynes M.J."/>
            <person name="Fincham J.R.S."/>
            <person name="Connerton I.F."/>
        </authorList>
    </citation>
    <scope>NUCLEOTIDE SEQUENCE [GENOMIC DNA]</scope>
</reference>
<reference key="2">
    <citation type="journal article" date="2003" name="Nature">
        <title>The genome sequence of the filamentous fungus Neurospora crassa.</title>
        <authorList>
            <person name="Galagan J.E."/>
            <person name="Calvo S.E."/>
            <person name="Borkovich K.A."/>
            <person name="Selker E.U."/>
            <person name="Read N.D."/>
            <person name="Jaffe D.B."/>
            <person name="FitzHugh W."/>
            <person name="Ma L.-J."/>
            <person name="Smirnov S."/>
            <person name="Purcell S."/>
            <person name="Rehman B."/>
            <person name="Elkins T."/>
            <person name="Engels R."/>
            <person name="Wang S."/>
            <person name="Nielsen C.B."/>
            <person name="Butler J."/>
            <person name="Endrizzi M."/>
            <person name="Qui D."/>
            <person name="Ianakiev P."/>
            <person name="Bell-Pedersen D."/>
            <person name="Nelson M.A."/>
            <person name="Werner-Washburne M."/>
            <person name="Selitrennikoff C.P."/>
            <person name="Kinsey J.A."/>
            <person name="Braun E.L."/>
            <person name="Zelter A."/>
            <person name="Schulte U."/>
            <person name="Kothe G.O."/>
            <person name="Jedd G."/>
            <person name="Mewes H.-W."/>
            <person name="Staben C."/>
            <person name="Marcotte E."/>
            <person name="Greenberg D."/>
            <person name="Roy A."/>
            <person name="Foley K."/>
            <person name="Naylor J."/>
            <person name="Stange-Thomann N."/>
            <person name="Barrett R."/>
            <person name="Gnerre S."/>
            <person name="Kamal M."/>
            <person name="Kamvysselis M."/>
            <person name="Mauceli E.W."/>
            <person name="Bielke C."/>
            <person name="Rudd S."/>
            <person name="Frishman D."/>
            <person name="Krystofova S."/>
            <person name="Rasmussen C."/>
            <person name="Metzenberg R.L."/>
            <person name="Perkins D.D."/>
            <person name="Kroken S."/>
            <person name="Cogoni C."/>
            <person name="Macino G."/>
            <person name="Catcheside D.E.A."/>
            <person name="Li W."/>
            <person name="Pratt R.J."/>
            <person name="Osmani S.A."/>
            <person name="DeSouza C.P.C."/>
            <person name="Glass N.L."/>
            <person name="Orbach M.J."/>
            <person name="Berglund J.A."/>
            <person name="Voelker R."/>
            <person name="Yarden O."/>
            <person name="Plamann M."/>
            <person name="Seiler S."/>
            <person name="Dunlap J.C."/>
            <person name="Radford A."/>
            <person name="Aramayo R."/>
            <person name="Natvig D.O."/>
            <person name="Alex L.A."/>
            <person name="Mannhaupt G."/>
            <person name="Ebbole D.J."/>
            <person name="Freitag M."/>
            <person name="Paulsen I."/>
            <person name="Sachs M.S."/>
            <person name="Lander E.S."/>
            <person name="Nusbaum C."/>
            <person name="Birren B.W."/>
        </authorList>
    </citation>
    <scope>NUCLEOTIDE SEQUENCE [LARGE SCALE GENOMIC DNA]</scope>
    <source>
        <strain>ATCC 24698 / 74-OR23-1A / CBS 708.71 / DSM 1257 / FGSC 987</strain>
    </source>
</reference>